<reference key="1">
    <citation type="submission" date="2004-06" db="EMBL/GenBank/DDBJ databases">
        <authorList>
            <consortium name="NIH - Xenopus Gene Collection (XGC) project"/>
        </authorList>
    </citation>
    <scope>NUCLEOTIDE SEQUENCE [LARGE SCALE MRNA]</scope>
    <source>
        <tissue>Embryo</tissue>
    </source>
</reference>
<accession>Q6GNI0</accession>
<feature type="chain" id="PRO_0000249690" description="Protein BCCIP homolog">
    <location>
        <begin position="1"/>
        <end position="308"/>
    </location>
</feature>
<feature type="region of interest" description="Disordered" evidence="2">
    <location>
        <begin position="1"/>
        <end position="53"/>
    </location>
</feature>
<feature type="compositionally biased region" description="Basic and acidic residues" evidence="2">
    <location>
        <begin position="8"/>
        <end position="21"/>
    </location>
</feature>
<feature type="compositionally biased region" description="Acidic residues" evidence="2">
    <location>
        <begin position="22"/>
        <end position="53"/>
    </location>
</feature>
<organism>
    <name type="scientific">Xenopus laevis</name>
    <name type="common">African clawed frog</name>
    <dbReference type="NCBI Taxonomy" id="8355"/>
    <lineage>
        <taxon>Eukaryota</taxon>
        <taxon>Metazoa</taxon>
        <taxon>Chordata</taxon>
        <taxon>Craniata</taxon>
        <taxon>Vertebrata</taxon>
        <taxon>Euteleostomi</taxon>
        <taxon>Amphibia</taxon>
        <taxon>Batrachia</taxon>
        <taxon>Anura</taxon>
        <taxon>Pipoidea</taxon>
        <taxon>Pipidae</taxon>
        <taxon>Xenopodinae</taxon>
        <taxon>Xenopus</taxon>
        <taxon>Xenopus</taxon>
    </lineage>
</organism>
<keyword id="KW-0131">Cell cycle</keyword>
<keyword id="KW-0963">Cytoplasm</keyword>
<keyword id="KW-0206">Cytoskeleton</keyword>
<keyword id="KW-0227">DNA damage</keyword>
<keyword id="KW-0234">DNA repair</keyword>
<keyword id="KW-0539">Nucleus</keyword>
<keyword id="KW-1185">Reference proteome</keyword>
<protein>
    <recommendedName>
        <fullName>Protein BCCIP homolog</fullName>
    </recommendedName>
</protein>
<name>BCCIP_XENLA</name>
<sequence>MASNAKRRALEPERLLEKHKEDEEDMEGDESEESDDIEEDESEEDEEVNEEVNIDFEAYTISDADYDGIKKLLKQLFLKAHVNISELTDLLIQQNHIGSAIKQAEGQDDSDDDEDDDHVFGVISLVNLTERKGTACVEQIKELILSRCEENCEQSLVEQFDKVLNDNSKPVGFLLSERFINVPAQIALPMHQQLQKELADSQRTNKPCGKCHYYLILSKTFMEATKTSKGSVGSQAKEELMFANAEDEFFYEKALVKFNYSVQEESDTQLGGRWSFSDVPMKPLRTAMLVPAERMNSIMDKFKEYLSV</sequence>
<comment type="function">
    <text evidence="1">During interphase, required for microtubule organizing and anchoring activities. During mitosis, required for the organization and stabilization of the spindle pole. May promote cell cycle arrest and DNA repair.</text>
</comment>
<comment type="subcellular location">
    <subcellularLocation>
        <location evidence="1">Nucleus</location>
    </subcellularLocation>
    <subcellularLocation>
        <location evidence="1">Cytoplasm</location>
        <location evidence="1">Cytoskeleton</location>
        <location evidence="1">Microtubule organizing center</location>
        <location evidence="1">Centrosome</location>
        <location evidence="1">Centriole</location>
    </subcellularLocation>
    <subcellularLocation>
        <location evidence="1">Cytoplasm</location>
        <location evidence="1">Cytoskeleton</location>
        <location evidence="1">Spindle pole</location>
    </subcellularLocation>
</comment>
<comment type="similarity">
    <text evidence="3">Belongs to the BCP1 family.</text>
</comment>
<dbReference type="EMBL" id="BC073531">
    <property type="protein sequence ID" value="AAH73531.1"/>
    <property type="molecule type" value="mRNA"/>
</dbReference>
<dbReference type="RefSeq" id="NP_001085917.1">
    <property type="nucleotide sequence ID" value="NM_001092448.1"/>
</dbReference>
<dbReference type="SMR" id="Q6GNI0"/>
<dbReference type="DNASU" id="444344"/>
<dbReference type="GeneID" id="444344"/>
<dbReference type="KEGG" id="xla:444344"/>
<dbReference type="AGR" id="Xenbase:XB-GENE-866129"/>
<dbReference type="CTD" id="444344"/>
<dbReference type="Xenbase" id="XB-GENE-866129">
    <property type="gene designation" value="bccip.L"/>
</dbReference>
<dbReference type="OMA" id="WAIENEA"/>
<dbReference type="OrthoDB" id="27543at2759"/>
<dbReference type="Proteomes" id="UP000186698">
    <property type="component" value="Chromosome 7L"/>
</dbReference>
<dbReference type="Bgee" id="444344">
    <property type="expression patterns" value="Expressed in pancreas and 19 other cell types or tissues"/>
</dbReference>
<dbReference type="GO" id="GO:0005814">
    <property type="term" value="C:centriole"/>
    <property type="evidence" value="ECO:0000250"/>
    <property type="project" value="UniProtKB"/>
</dbReference>
<dbReference type="GO" id="GO:0005813">
    <property type="term" value="C:centrosome"/>
    <property type="evidence" value="ECO:0000250"/>
    <property type="project" value="UniProtKB"/>
</dbReference>
<dbReference type="GO" id="GO:0005737">
    <property type="term" value="C:cytoplasm"/>
    <property type="evidence" value="ECO:0007669"/>
    <property type="project" value="UniProtKB-KW"/>
</dbReference>
<dbReference type="GO" id="GO:0097431">
    <property type="term" value="C:mitotic spindle pole"/>
    <property type="evidence" value="ECO:0000250"/>
    <property type="project" value="UniProtKB"/>
</dbReference>
<dbReference type="GO" id="GO:0005634">
    <property type="term" value="C:nucleus"/>
    <property type="evidence" value="ECO:0000318"/>
    <property type="project" value="GO_Central"/>
</dbReference>
<dbReference type="GO" id="GO:0006281">
    <property type="term" value="P:DNA repair"/>
    <property type="evidence" value="ECO:0007669"/>
    <property type="project" value="UniProtKB-KW"/>
</dbReference>
<dbReference type="GO" id="GO:0034453">
    <property type="term" value="P:microtubule anchoring"/>
    <property type="evidence" value="ECO:0000250"/>
    <property type="project" value="UniProtKB"/>
</dbReference>
<dbReference type="GO" id="GO:0000226">
    <property type="term" value="P:microtubule cytoskeleton organization"/>
    <property type="evidence" value="ECO:0000250"/>
    <property type="project" value="UniProtKB"/>
</dbReference>
<dbReference type="GO" id="GO:0090307">
    <property type="term" value="P:mitotic spindle assembly"/>
    <property type="evidence" value="ECO:0000250"/>
    <property type="project" value="UniProtKB"/>
</dbReference>
<dbReference type="GO" id="GO:0007052">
    <property type="term" value="P:mitotic spindle organization"/>
    <property type="evidence" value="ECO:0000250"/>
    <property type="project" value="UniProtKB"/>
</dbReference>
<dbReference type="InterPro" id="IPR025602">
    <property type="entry name" value="BCP1_family"/>
</dbReference>
<dbReference type="PANTHER" id="PTHR13261">
    <property type="entry name" value="BRCA2 AND CDKN1A INTERACTING PROTEIN"/>
    <property type="match status" value="1"/>
</dbReference>
<dbReference type="PANTHER" id="PTHR13261:SF0">
    <property type="entry name" value="BRCA2 AND CDKN1A-INTERACTING PROTEIN"/>
    <property type="match status" value="1"/>
</dbReference>
<dbReference type="Pfam" id="PF13862">
    <property type="entry name" value="BCCIP"/>
    <property type="match status" value="1"/>
</dbReference>
<dbReference type="PIRSF" id="PIRSF028983">
    <property type="entry name" value="BCP1"/>
    <property type="match status" value="1"/>
</dbReference>
<proteinExistence type="evidence at transcript level"/>
<gene>
    <name type="primary">bccip</name>
</gene>
<evidence type="ECO:0000250" key="1">
    <source>
        <dbReference type="UniProtKB" id="Q9P287"/>
    </source>
</evidence>
<evidence type="ECO:0000256" key="2">
    <source>
        <dbReference type="SAM" id="MobiDB-lite"/>
    </source>
</evidence>
<evidence type="ECO:0000305" key="3"/>